<sequence length="283" mass="31617">MRIIETVSEMQQQADDWRRAGKRIGFVPTMGYFHEGHLMLMRKVRGEADMVVASIFVNPAQFGPNEDLATYPRDLDRDLRLAGEVGVDVAFVPQVGEMYPDGYQTYVEVTKVTAPLCGRSRPLFFRGVATVVVKLFHIVKPHVAVFGEKDYQQLVTIRRMVKDLNLDIEILGHPIVREPDDLAMSSRNKYLTPEQRPLALRLSRALKAARARVALGERNGSVILKEVKELLDAGGEVRIDYAELRDPATMEEVGSMDGPSLLALAVFVGTTRLIDNCILRPAA</sequence>
<dbReference type="EC" id="6.3.2.1" evidence="1"/>
<dbReference type="EMBL" id="CP000478">
    <property type="protein sequence ID" value="ABK16069.1"/>
    <property type="molecule type" value="Genomic_DNA"/>
</dbReference>
<dbReference type="RefSeq" id="WP_011697242.1">
    <property type="nucleotide sequence ID" value="NC_008554.1"/>
</dbReference>
<dbReference type="SMR" id="A0LF67"/>
<dbReference type="FunCoup" id="A0LF67">
    <property type="interactions" value="533"/>
</dbReference>
<dbReference type="STRING" id="335543.Sfum_0369"/>
<dbReference type="KEGG" id="sfu:Sfum_0369"/>
<dbReference type="eggNOG" id="COG0414">
    <property type="taxonomic scope" value="Bacteria"/>
</dbReference>
<dbReference type="HOGENOM" id="CLU_047148_0_0_7"/>
<dbReference type="InParanoid" id="A0LF67"/>
<dbReference type="OrthoDB" id="9773087at2"/>
<dbReference type="UniPathway" id="UPA00028">
    <property type="reaction ID" value="UER00005"/>
</dbReference>
<dbReference type="Proteomes" id="UP000001784">
    <property type="component" value="Chromosome"/>
</dbReference>
<dbReference type="GO" id="GO:0005829">
    <property type="term" value="C:cytosol"/>
    <property type="evidence" value="ECO:0007669"/>
    <property type="project" value="TreeGrafter"/>
</dbReference>
<dbReference type="GO" id="GO:0005524">
    <property type="term" value="F:ATP binding"/>
    <property type="evidence" value="ECO:0007669"/>
    <property type="project" value="UniProtKB-KW"/>
</dbReference>
<dbReference type="GO" id="GO:0004592">
    <property type="term" value="F:pantoate-beta-alanine ligase activity"/>
    <property type="evidence" value="ECO:0007669"/>
    <property type="project" value="UniProtKB-UniRule"/>
</dbReference>
<dbReference type="GO" id="GO:0015940">
    <property type="term" value="P:pantothenate biosynthetic process"/>
    <property type="evidence" value="ECO:0007669"/>
    <property type="project" value="UniProtKB-UniRule"/>
</dbReference>
<dbReference type="CDD" id="cd00560">
    <property type="entry name" value="PanC"/>
    <property type="match status" value="1"/>
</dbReference>
<dbReference type="FunFam" id="3.40.50.620:FF:000013">
    <property type="entry name" value="Pantothenate synthetase"/>
    <property type="match status" value="1"/>
</dbReference>
<dbReference type="Gene3D" id="3.40.50.620">
    <property type="entry name" value="HUPs"/>
    <property type="match status" value="1"/>
</dbReference>
<dbReference type="Gene3D" id="3.30.1300.10">
    <property type="entry name" value="Pantoate-beta-alanine ligase, C-terminal domain"/>
    <property type="match status" value="1"/>
</dbReference>
<dbReference type="HAMAP" id="MF_00158">
    <property type="entry name" value="PanC"/>
    <property type="match status" value="1"/>
</dbReference>
<dbReference type="InterPro" id="IPR003721">
    <property type="entry name" value="Pantoate_ligase"/>
</dbReference>
<dbReference type="InterPro" id="IPR042176">
    <property type="entry name" value="Pantoate_ligase_C"/>
</dbReference>
<dbReference type="InterPro" id="IPR014729">
    <property type="entry name" value="Rossmann-like_a/b/a_fold"/>
</dbReference>
<dbReference type="NCBIfam" id="TIGR00018">
    <property type="entry name" value="panC"/>
    <property type="match status" value="1"/>
</dbReference>
<dbReference type="PANTHER" id="PTHR21299">
    <property type="entry name" value="CYTIDYLATE KINASE/PANTOATE-BETA-ALANINE LIGASE"/>
    <property type="match status" value="1"/>
</dbReference>
<dbReference type="PANTHER" id="PTHR21299:SF1">
    <property type="entry name" value="PANTOATE--BETA-ALANINE LIGASE"/>
    <property type="match status" value="1"/>
</dbReference>
<dbReference type="Pfam" id="PF02569">
    <property type="entry name" value="Pantoate_ligase"/>
    <property type="match status" value="1"/>
</dbReference>
<dbReference type="SUPFAM" id="SSF52374">
    <property type="entry name" value="Nucleotidylyl transferase"/>
    <property type="match status" value="1"/>
</dbReference>
<name>PANC_SYNFM</name>
<protein>
    <recommendedName>
        <fullName evidence="1">Pantothenate synthetase</fullName>
        <shortName evidence="1">PS</shortName>
        <ecNumber evidence="1">6.3.2.1</ecNumber>
    </recommendedName>
    <alternativeName>
        <fullName evidence="1">Pantoate--beta-alanine ligase</fullName>
    </alternativeName>
    <alternativeName>
        <fullName evidence="1">Pantoate-activating enzyme</fullName>
    </alternativeName>
</protein>
<evidence type="ECO:0000255" key="1">
    <source>
        <dbReference type="HAMAP-Rule" id="MF_00158"/>
    </source>
</evidence>
<gene>
    <name evidence="1" type="primary">panC</name>
    <name type="ordered locus">Sfum_0369</name>
</gene>
<keyword id="KW-0067">ATP-binding</keyword>
<keyword id="KW-0963">Cytoplasm</keyword>
<keyword id="KW-0436">Ligase</keyword>
<keyword id="KW-0547">Nucleotide-binding</keyword>
<keyword id="KW-0566">Pantothenate biosynthesis</keyword>
<keyword id="KW-1185">Reference proteome</keyword>
<proteinExistence type="inferred from homology"/>
<reference key="1">
    <citation type="submission" date="2006-10" db="EMBL/GenBank/DDBJ databases">
        <title>Complete sequence of Syntrophobacter fumaroxidans MPOB.</title>
        <authorList>
            <consortium name="US DOE Joint Genome Institute"/>
            <person name="Copeland A."/>
            <person name="Lucas S."/>
            <person name="Lapidus A."/>
            <person name="Barry K."/>
            <person name="Detter J.C."/>
            <person name="Glavina del Rio T."/>
            <person name="Hammon N."/>
            <person name="Israni S."/>
            <person name="Pitluck S."/>
            <person name="Goltsman E.G."/>
            <person name="Martinez M."/>
            <person name="Schmutz J."/>
            <person name="Larimer F."/>
            <person name="Land M."/>
            <person name="Hauser L."/>
            <person name="Kyrpides N."/>
            <person name="Kim E."/>
            <person name="Boone D.R."/>
            <person name="Brockman F."/>
            <person name="Culley D."/>
            <person name="Ferry J."/>
            <person name="Gunsalus R."/>
            <person name="McInerney M.J."/>
            <person name="Morrison M."/>
            <person name="Plugge C."/>
            <person name="Rohlin L."/>
            <person name="Scholten J."/>
            <person name="Sieber J."/>
            <person name="Stams A.J.M."/>
            <person name="Worm P."/>
            <person name="Henstra A.M."/>
            <person name="Richardson P."/>
        </authorList>
    </citation>
    <scope>NUCLEOTIDE SEQUENCE [LARGE SCALE GENOMIC DNA]</scope>
    <source>
        <strain>DSM 10017 / MPOB</strain>
    </source>
</reference>
<comment type="function">
    <text evidence="1">Catalyzes the condensation of pantoate with beta-alanine in an ATP-dependent reaction via a pantoyl-adenylate intermediate.</text>
</comment>
<comment type="catalytic activity">
    <reaction evidence="1">
        <text>(R)-pantoate + beta-alanine + ATP = (R)-pantothenate + AMP + diphosphate + H(+)</text>
        <dbReference type="Rhea" id="RHEA:10912"/>
        <dbReference type="ChEBI" id="CHEBI:15378"/>
        <dbReference type="ChEBI" id="CHEBI:15980"/>
        <dbReference type="ChEBI" id="CHEBI:29032"/>
        <dbReference type="ChEBI" id="CHEBI:30616"/>
        <dbReference type="ChEBI" id="CHEBI:33019"/>
        <dbReference type="ChEBI" id="CHEBI:57966"/>
        <dbReference type="ChEBI" id="CHEBI:456215"/>
        <dbReference type="EC" id="6.3.2.1"/>
    </reaction>
</comment>
<comment type="pathway">
    <text evidence="1">Cofactor biosynthesis; (R)-pantothenate biosynthesis; (R)-pantothenate from (R)-pantoate and beta-alanine: step 1/1.</text>
</comment>
<comment type="subunit">
    <text evidence="1">Homodimer.</text>
</comment>
<comment type="subcellular location">
    <subcellularLocation>
        <location evidence="1">Cytoplasm</location>
    </subcellularLocation>
</comment>
<comment type="miscellaneous">
    <text evidence="1">The reaction proceeds by a bi uni uni bi ping pong mechanism.</text>
</comment>
<comment type="similarity">
    <text evidence="1">Belongs to the pantothenate synthetase family.</text>
</comment>
<accession>A0LF67</accession>
<organism>
    <name type="scientific">Syntrophobacter fumaroxidans (strain DSM 10017 / MPOB)</name>
    <dbReference type="NCBI Taxonomy" id="335543"/>
    <lineage>
        <taxon>Bacteria</taxon>
        <taxon>Pseudomonadati</taxon>
        <taxon>Thermodesulfobacteriota</taxon>
        <taxon>Syntrophobacteria</taxon>
        <taxon>Syntrophobacterales</taxon>
        <taxon>Syntrophobacteraceae</taxon>
        <taxon>Syntrophobacter</taxon>
    </lineage>
</organism>
<feature type="chain" id="PRO_0000305564" description="Pantothenate synthetase">
    <location>
        <begin position="1"/>
        <end position="283"/>
    </location>
</feature>
<feature type="active site" description="Proton donor" evidence="1">
    <location>
        <position position="37"/>
    </location>
</feature>
<feature type="binding site" evidence="1">
    <location>
        <begin position="30"/>
        <end position="37"/>
    </location>
    <ligand>
        <name>ATP</name>
        <dbReference type="ChEBI" id="CHEBI:30616"/>
    </ligand>
</feature>
<feature type="binding site" evidence="1">
    <location>
        <position position="61"/>
    </location>
    <ligand>
        <name>(R)-pantoate</name>
        <dbReference type="ChEBI" id="CHEBI:15980"/>
    </ligand>
</feature>
<feature type="binding site" evidence="1">
    <location>
        <position position="61"/>
    </location>
    <ligand>
        <name>beta-alanine</name>
        <dbReference type="ChEBI" id="CHEBI:57966"/>
    </ligand>
</feature>
<feature type="binding site" evidence="1">
    <location>
        <begin position="147"/>
        <end position="150"/>
    </location>
    <ligand>
        <name>ATP</name>
        <dbReference type="ChEBI" id="CHEBI:30616"/>
    </ligand>
</feature>
<feature type="binding site" evidence="1">
    <location>
        <position position="153"/>
    </location>
    <ligand>
        <name>(R)-pantoate</name>
        <dbReference type="ChEBI" id="CHEBI:15980"/>
    </ligand>
</feature>
<feature type="binding site" evidence="1">
    <location>
        <position position="176"/>
    </location>
    <ligand>
        <name>ATP</name>
        <dbReference type="ChEBI" id="CHEBI:30616"/>
    </ligand>
</feature>
<feature type="binding site" evidence="1">
    <location>
        <begin position="184"/>
        <end position="187"/>
    </location>
    <ligand>
        <name>ATP</name>
        <dbReference type="ChEBI" id="CHEBI:30616"/>
    </ligand>
</feature>